<evidence type="ECO:0000255" key="1">
    <source>
        <dbReference type="HAMAP-Rule" id="MF_01025"/>
    </source>
</evidence>
<name>LEU1_SHEB8</name>
<sequence>MSNRVIIFDTTLRDGEQALAASLSVKEKLQIAMALERLGVDVMEVGFPVSSPGDFESVQTIARTIKNSRVCALSRALEKDIDAAAQALSVAEQFRIHTFISTSTIHVESKLKRSFDQVLEMAVGAVKYARRFTDDVEFSCEDAGRTPIDNLCRMVEAAILAGARTINIPDTVGYTVPSEFGNIIQTLFNRVPNIDQAVISVHCHDDLGLSVANSITAVQHGARQIECTINGIGERAGNCSLEEIAMILATRKGMLGLETGINAKEIHRTSNLVSQLCNMPVQANKAIVGANAFTHSSGIHQDGMLKAQNTYEIMTPESIGLNRNNLNMTSRSGRHVIKHRMEEMGYSEHDYNMDALYEEFLKLADKKGQVFDYDLEALAFMEAQAEEDNHYQLQQLVVQSDSTEGVATATVRIEVGGEIKTEAATGNGPVDAAYNAIARATDRRIDIISYKLGAKGVGQNALGQVDITAVYHEQNFHGVGLATDVVEASARALVHVMNLTCRADKVADYKQSMQKNRELGGV</sequence>
<protein>
    <recommendedName>
        <fullName evidence="1">2-isopropylmalate synthase</fullName>
        <ecNumber evidence="1">2.3.3.13</ecNumber>
    </recommendedName>
    <alternativeName>
        <fullName evidence="1">Alpha-IPM synthase</fullName>
    </alternativeName>
    <alternativeName>
        <fullName evidence="1">Alpha-isopropylmalate synthase</fullName>
    </alternativeName>
</protein>
<feature type="chain" id="PRO_1000149280" description="2-isopropylmalate synthase">
    <location>
        <begin position="1"/>
        <end position="522"/>
    </location>
</feature>
<feature type="domain" description="Pyruvate carboxyltransferase" evidence="1">
    <location>
        <begin position="5"/>
        <end position="267"/>
    </location>
</feature>
<feature type="region of interest" description="Regulatory domain" evidence="1">
    <location>
        <begin position="392"/>
        <end position="522"/>
    </location>
</feature>
<feature type="binding site" evidence="1">
    <location>
        <position position="14"/>
    </location>
    <ligand>
        <name>Mn(2+)</name>
        <dbReference type="ChEBI" id="CHEBI:29035"/>
    </ligand>
</feature>
<feature type="binding site" evidence="1">
    <location>
        <position position="202"/>
    </location>
    <ligand>
        <name>Mn(2+)</name>
        <dbReference type="ChEBI" id="CHEBI:29035"/>
    </ligand>
</feature>
<feature type="binding site" evidence="1">
    <location>
        <position position="204"/>
    </location>
    <ligand>
        <name>Mn(2+)</name>
        <dbReference type="ChEBI" id="CHEBI:29035"/>
    </ligand>
</feature>
<feature type="binding site" evidence="1">
    <location>
        <position position="238"/>
    </location>
    <ligand>
        <name>Mn(2+)</name>
        <dbReference type="ChEBI" id="CHEBI:29035"/>
    </ligand>
</feature>
<organism>
    <name type="scientific">Shewanella baltica (strain OS185)</name>
    <dbReference type="NCBI Taxonomy" id="402882"/>
    <lineage>
        <taxon>Bacteria</taxon>
        <taxon>Pseudomonadati</taxon>
        <taxon>Pseudomonadota</taxon>
        <taxon>Gammaproteobacteria</taxon>
        <taxon>Alteromonadales</taxon>
        <taxon>Shewanellaceae</taxon>
        <taxon>Shewanella</taxon>
    </lineage>
</organism>
<comment type="function">
    <text evidence="1">Catalyzes the condensation of the acetyl group of acetyl-CoA with 3-methyl-2-oxobutanoate (2-ketoisovalerate) to form 3-carboxy-3-hydroxy-4-methylpentanoate (2-isopropylmalate).</text>
</comment>
<comment type="catalytic activity">
    <reaction evidence="1">
        <text>3-methyl-2-oxobutanoate + acetyl-CoA + H2O = (2S)-2-isopropylmalate + CoA + H(+)</text>
        <dbReference type="Rhea" id="RHEA:21524"/>
        <dbReference type="ChEBI" id="CHEBI:1178"/>
        <dbReference type="ChEBI" id="CHEBI:11851"/>
        <dbReference type="ChEBI" id="CHEBI:15377"/>
        <dbReference type="ChEBI" id="CHEBI:15378"/>
        <dbReference type="ChEBI" id="CHEBI:57287"/>
        <dbReference type="ChEBI" id="CHEBI:57288"/>
        <dbReference type="EC" id="2.3.3.13"/>
    </reaction>
</comment>
<comment type="cofactor">
    <cofactor evidence="1">
        <name>Mn(2+)</name>
        <dbReference type="ChEBI" id="CHEBI:29035"/>
    </cofactor>
</comment>
<comment type="pathway">
    <text evidence="1">Amino-acid biosynthesis; L-leucine biosynthesis; L-leucine from 3-methyl-2-oxobutanoate: step 1/4.</text>
</comment>
<comment type="subunit">
    <text evidence="1">Homodimer.</text>
</comment>
<comment type="subcellular location">
    <subcellularLocation>
        <location evidence="1">Cytoplasm</location>
    </subcellularLocation>
</comment>
<comment type="similarity">
    <text evidence="1">Belongs to the alpha-IPM synthase/homocitrate synthase family. LeuA type 1 subfamily.</text>
</comment>
<dbReference type="EC" id="2.3.3.13" evidence="1"/>
<dbReference type="EMBL" id="CP000753">
    <property type="protein sequence ID" value="ABS06554.1"/>
    <property type="molecule type" value="Genomic_DNA"/>
</dbReference>
<dbReference type="RefSeq" id="WP_011982220.1">
    <property type="nucleotide sequence ID" value="NC_009665.1"/>
</dbReference>
<dbReference type="SMR" id="A6WIB5"/>
<dbReference type="KEGG" id="sbm:Shew185_0385"/>
<dbReference type="HOGENOM" id="CLU_022158_0_1_6"/>
<dbReference type="UniPathway" id="UPA00048">
    <property type="reaction ID" value="UER00070"/>
</dbReference>
<dbReference type="GO" id="GO:0005829">
    <property type="term" value="C:cytosol"/>
    <property type="evidence" value="ECO:0007669"/>
    <property type="project" value="TreeGrafter"/>
</dbReference>
<dbReference type="GO" id="GO:0003852">
    <property type="term" value="F:2-isopropylmalate synthase activity"/>
    <property type="evidence" value="ECO:0007669"/>
    <property type="project" value="UniProtKB-UniRule"/>
</dbReference>
<dbReference type="GO" id="GO:0003985">
    <property type="term" value="F:acetyl-CoA C-acetyltransferase activity"/>
    <property type="evidence" value="ECO:0007669"/>
    <property type="project" value="UniProtKB-UniRule"/>
</dbReference>
<dbReference type="GO" id="GO:0030145">
    <property type="term" value="F:manganese ion binding"/>
    <property type="evidence" value="ECO:0007669"/>
    <property type="project" value="UniProtKB-UniRule"/>
</dbReference>
<dbReference type="GO" id="GO:0009098">
    <property type="term" value="P:L-leucine biosynthetic process"/>
    <property type="evidence" value="ECO:0007669"/>
    <property type="project" value="UniProtKB-UniRule"/>
</dbReference>
<dbReference type="CDD" id="cd07940">
    <property type="entry name" value="DRE_TIM_IPMS"/>
    <property type="match status" value="1"/>
</dbReference>
<dbReference type="FunFam" id="1.10.238.260:FF:000001">
    <property type="entry name" value="2-isopropylmalate synthase"/>
    <property type="match status" value="1"/>
</dbReference>
<dbReference type="FunFam" id="3.20.20.70:FF:000010">
    <property type="entry name" value="2-isopropylmalate synthase"/>
    <property type="match status" value="1"/>
</dbReference>
<dbReference type="Gene3D" id="1.10.238.260">
    <property type="match status" value="1"/>
</dbReference>
<dbReference type="Gene3D" id="3.30.160.270">
    <property type="match status" value="1"/>
</dbReference>
<dbReference type="Gene3D" id="3.20.20.70">
    <property type="entry name" value="Aldolase class I"/>
    <property type="match status" value="1"/>
</dbReference>
<dbReference type="HAMAP" id="MF_01025">
    <property type="entry name" value="LeuA_type1"/>
    <property type="match status" value="1"/>
</dbReference>
<dbReference type="InterPro" id="IPR050073">
    <property type="entry name" value="2-IPM_HCS-like"/>
</dbReference>
<dbReference type="InterPro" id="IPR013709">
    <property type="entry name" value="2-isopropylmalate_synth_dimer"/>
</dbReference>
<dbReference type="InterPro" id="IPR002034">
    <property type="entry name" value="AIPM/Hcit_synth_CS"/>
</dbReference>
<dbReference type="InterPro" id="IPR013785">
    <property type="entry name" value="Aldolase_TIM"/>
</dbReference>
<dbReference type="InterPro" id="IPR054691">
    <property type="entry name" value="LeuA/HCS_post-cat"/>
</dbReference>
<dbReference type="InterPro" id="IPR036230">
    <property type="entry name" value="LeuA_allosteric_dom_sf"/>
</dbReference>
<dbReference type="InterPro" id="IPR005671">
    <property type="entry name" value="LeuA_bact_synth"/>
</dbReference>
<dbReference type="InterPro" id="IPR000891">
    <property type="entry name" value="PYR_CT"/>
</dbReference>
<dbReference type="NCBIfam" id="TIGR00973">
    <property type="entry name" value="leuA_bact"/>
    <property type="match status" value="1"/>
</dbReference>
<dbReference type="NCBIfam" id="NF002084">
    <property type="entry name" value="PRK00915.1-1"/>
    <property type="match status" value="1"/>
</dbReference>
<dbReference type="NCBIfam" id="NF002086">
    <property type="entry name" value="PRK00915.1-3"/>
    <property type="match status" value="1"/>
</dbReference>
<dbReference type="PANTHER" id="PTHR10277:SF9">
    <property type="entry name" value="2-ISOPROPYLMALATE SYNTHASE 1, CHLOROPLASTIC-RELATED"/>
    <property type="match status" value="1"/>
</dbReference>
<dbReference type="PANTHER" id="PTHR10277">
    <property type="entry name" value="HOMOCITRATE SYNTHASE-RELATED"/>
    <property type="match status" value="1"/>
</dbReference>
<dbReference type="Pfam" id="PF22617">
    <property type="entry name" value="HCS_D2"/>
    <property type="match status" value="1"/>
</dbReference>
<dbReference type="Pfam" id="PF00682">
    <property type="entry name" value="HMGL-like"/>
    <property type="match status" value="1"/>
</dbReference>
<dbReference type="Pfam" id="PF08502">
    <property type="entry name" value="LeuA_dimer"/>
    <property type="match status" value="1"/>
</dbReference>
<dbReference type="SMART" id="SM00917">
    <property type="entry name" value="LeuA_dimer"/>
    <property type="match status" value="1"/>
</dbReference>
<dbReference type="SUPFAM" id="SSF110921">
    <property type="entry name" value="2-isopropylmalate synthase LeuA, allosteric (dimerisation) domain"/>
    <property type="match status" value="1"/>
</dbReference>
<dbReference type="SUPFAM" id="SSF51569">
    <property type="entry name" value="Aldolase"/>
    <property type="match status" value="1"/>
</dbReference>
<dbReference type="PROSITE" id="PS00815">
    <property type="entry name" value="AIPM_HOMOCIT_SYNTH_1"/>
    <property type="match status" value="1"/>
</dbReference>
<dbReference type="PROSITE" id="PS00816">
    <property type="entry name" value="AIPM_HOMOCIT_SYNTH_2"/>
    <property type="match status" value="1"/>
</dbReference>
<dbReference type="PROSITE" id="PS50991">
    <property type="entry name" value="PYR_CT"/>
    <property type="match status" value="1"/>
</dbReference>
<keyword id="KW-0028">Amino-acid biosynthesis</keyword>
<keyword id="KW-0100">Branched-chain amino acid biosynthesis</keyword>
<keyword id="KW-0963">Cytoplasm</keyword>
<keyword id="KW-0432">Leucine biosynthesis</keyword>
<keyword id="KW-0464">Manganese</keyword>
<keyword id="KW-0479">Metal-binding</keyword>
<keyword id="KW-0808">Transferase</keyword>
<accession>A6WIB5</accession>
<gene>
    <name evidence="1" type="primary">leuA</name>
    <name type="ordered locus">Shew185_0385</name>
</gene>
<proteinExistence type="inferred from homology"/>
<reference key="1">
    <citation type="submission" date="2007-07" db="EMBL/GenBank/DDBJ databases">
        <title>Complete sequence of chromosome of Shewanella baltica OS185.</title>
        <authorList>
            <consortium name="US DOE Joint Genome Institute"/>
            <person name="Copeland A."/>
            <person name="Lucas S."/>
            <person name="Lapidus A."/>
            <person name="Barry K."/>
            <person name="Glavina del Rio T."/>
            <person name="Dalin E."/>
            <person name="Tice H."/>
            <person name="Pitluck S."/>
            <person name="Sims D."/>
            <person name="Brettin T."/>
            <person name="Bruce D."/>
            <person name="Detter J.C."/>
            <person name="Han C."/>
            <person name="Schmutz J."/>
            <person name="Larimer F."/>
            <person name="Land M."/>
            <person name="Hauser L."/>
            <person name="Kyrpides N."/>
            <person name="Mikhailova N."/>
            <person name="Brettar I."/>
            <person name="Rodrigues J."/>
            <person name="Konstantinidis K."/>
            <person name="Tiedje J."/>
            <person name="Richardson P."/>
        </authorList>
    </citation>
    <scope>NUCLEOTIDE SEQUENCE [LARGE SCALE GENOMIC DNA]</scope>
    <source>
        <strain>OS185</strain>
    </source>
</reference>